<protein>
    <recommendedName>
        <fullName evidence="4">Large ribosomal subunit protein eL21</fullName>
    </recommendedName>
    <alternativeName>
        <fullName>60S ribosomal protein L21</fullName>
    </alternativeName>
</protein>
<feature type="chain" id="PRO_0000149672" description="Large ribosomal subunit protein eL21">
    <location>
        <begin position="1"/>
        <end position="160"/>
    </location>
</feature>
<feature type="region of interest" description="Disordered" evidence="3">
    <location>
        <begin position="112"/>
        <end position="146"/>
    </location>
</feature>
<feature type="compositionally biased region" description="Basic and acidic residues" evidence="3">
    <location>
        <begin position="112"/>
        <end position="123"/>
    </location>
</feature>
<feature type="compositionally biased region" description="Basic and acidic residues" evidence="3">
    <location>
        <begin position="136"/>
        <end position="146"/>
    </location>
</feature>
<comment type="function">
    <text evidence="1">Component of the large ribosomal subunit. The ribosome is a large ribonucleoprotein complex responsible for the synthesis of proteins in the cell.</text>
</comment>
<comment type="subunit">
    <text evidence="1">Component of the large ribosomal subunit.</text>
</comment>
<comment type="subcellular location">
    <subcellularLocation>
        <location evidence="1">Cytoplasm</location>
        <location evidence="1">Cytosol</location>
    </subcellularLocation>
    <subcellularLocation>
        <location evidence="1">Cytoplasm</location>
    </subcellularLocation>
    <subcellularLocation>
        <location evidence="2">Endoplasmic reticulum</location>
    </subcellularLocation>
    <text evidence="1 2">Detected on cytosolic polysomes (By similarity). Detected in ribosomes that are associated with the rough endoplasmic reticulum (By similarity).</text>
</comment>
<comment type="similarity">
    <text evidence="4">Belongs to the eukaryotic ribosomal protein eL21 family.</text>
</comment>
<evidence type="ECO:0000250" key="1">
    <source>
        <dbReference type="UniProtKB" id="P46778"/>
    </source>
</evidence>
<evidence type="ECO:0000250" key="2">
    <source>
        <dbReference type="UniProtKB" id="P49666"/>
    </source>
</evidence>
<evidence type="ECO:0000256" key="3">
    <source>
        <dbReference type="SAM" id="MobiDB-lite"/>
    </source>
</evidence>
<evidence type="ECO:0000305" key="4"/>
<proteinExistence type="evidence at protein level"/>
<sequence length="160" mass="18466">MTNTKGKRRGTRYMFSRPFRKHGVVPLATYMRIYKKGDIVDIKGMGTVQKGMPHKCYHGKTGRVYNVTQHAVGIIVNKQVKGKILAKRINVRIEHIKHSKSRDSFLKRVKENDQKKKEAKEKGTWVQLNGQPAPPREAHFVRTNGKEPELLEPIPYEFMA</sequence>
<accession>P20280</accession>
<keyword id="KW-0963">Cytoplasm</keyword>
<keyword id="KW-0903">Direct protein sequencing</keyword>
<keyword id="KW-0256">Endoplasmic reticulum</keyword>
<keyword id="KW-1185">Reference proteome</keyword>
<keyword id="KW-0687">Ribonucleoprotein</keyword>
<keyword id="KW-0689">Ribosomal protein</keyword>
<reference key="1">
    <citation type="journal article" date="1989" name="Biochem. Biophys. Res. Commun.">
        <title>The primary structure of rat ribosomal protein L21.</title>
        <authorList>
            <person name="Devi K.R.G."/>
            <person name="Chan Y.-L."/>
            <person name="Wool I.G."/>
        </authorList>
    </citation>
    <scope>NUCLEOTIDE SEQUENCE [MRNA]</scope>
    <scope>PARTIAL PROTEIN SEQUENCE</scope>
    <source>
        <strain>Sprague-Dawley</strain>
        <tissue>Liver</tissue>
    </source>
</reference>
<gene>
    <name type="primary">Rpl21</name>
</gene>
<organism>
    <name type="scientific">Rattus norvegicus</name>
    <name type="common">Rat</name>
    <dbReference type="NCBI Taxonomy" id="10116"/>
    <lineage>
        <taxon>Eukaryota</taxon>
        <taxon>Metazoa</taxon>
        <taxon>Chordata</taxon>
        <taxon>Craniata</taxon>
        <taxon>Vertebrata</taxon>
        <taxon>Euteleostomi</taxon>
        <taxon>Mammalia</taxon>
        <taxon>Eutheria</taxon>
        <taxon>Euarchontoglires</taxon>
        <taxon>Glires</taxon>
        <taxon>Rodentia</taxon>
        <taxon>Myomorpha</taxon>
        <taxon>Muroidea</taxon>
        <taxon>Muridae</taxon>
        <taxon>Murinae</taxon>
        <taxon>Rattus</taxon>
    </lineage>
</organism>
<dbReference type="EMBL" id="M27905">
    <property type="protein sequence ID" value="AAA41504.1"/>
    <property type="molecule type" value="mRNA"/>
</dbReference>
<dbReference type="EMBL" id="X15216">
    <property type="protein sequence ID" value="CAA33286.1"/>
    <property type="molecule type" value="mRNA"/>
</dbReference>
<dbReference type="PIR" id="A33295">
    <property type="entry name" value="R5RT21"/>
</dbReference>
<dbReference type="RefSeq" id="NP_445782.1">
    <property type="nucleotide sequence ID" value="NM_053330.1"/>
</dbReference>
<dbReference type="SMR" id="P20280"/>
<dbReference type="BioGRID" id="249469">
    <property type="interactions" value="1"/>
</dbReference>
<dbReference type="FunCoup" id="P20280">
    <property type="interactions" value="718"/>
</dbReference>
<dbReference type="STRING" id="10116.ENSRNOP00000001265"/>
<dbReference type="iPTMnet" id="P20280"/>
<dbReference type="PhosphoSitePlus" id="P20280"/>
<dbReference type="SwissPalm" id="P20280"/>
<dbReference type="jPOST" id="P20280"/>
<dbReference type="PaxDb" id="10116-ENSRNOP00000001265"/>
<dbReference type="GeneID" id="79449"/>
<dbReference type="KEGG" id="rno:79449"/>
<dbReference type="AGR" id="RGD:11383150"/>
<dbReference type="AGR" id="RGD:11416552"/>
<dbReference type="AGR" id="RGD:11427815"/>
<dbReference type="AGR" id="RGD:41079295"/>
<dbReference type="AGR" id="RGD:41333177"/>
<dbReference type="AGR" id="RGD:68390"/>
<dbReference type="AGR" id="RGD:7700714"/>
<dbReference type="CTD" id="6144"/>
<dbReference type="RGD" id="68390">
    <property type="gene designation" value="Rpl21"/>
</dbReference>
<dbReference type="eggNOG" id="KOG1732">
    <property type="taxonomic scope" value="Eukaryota"/>
</dbReference>
<dbReference type="InParanoid" id="P20280"/>
<dbReference type="OrthoDB" id="9981295at2759"/>
<dbReference type="PhylomeDB" id="P20280"/>
<dbReference type="PRO" id="PR:P20280"/>
<dbReference type="Proteomes" id="UP000002494">
    <property type="component" value="Unplaced"/>
</dbReference>
<dbReference type="GO" id="GO:0005737">
    <property type="term" value="C:cytoplasm"/>
    <property type="evidence" value="ECO:0000266"/>
    <property type="project" value="RGD"/>
</dbReference>
<dbReference type="GO" id="GO:0022625">
    <property type="term" value="C:cytosolic large ribosomal subunit"/>
    <property type="evidence" value="ECO:0000314"/>
    <property type="project" value="RGD"/>
</dbReference>
<dbReference type="GO" id="GO:0022626">
    <property type="term" value="C:cytosolic ribosome"/>
    <property type="evidence" value="ECO:0000266"/>
    <property type="project" value="RGD"/>
</dbReference>
<dbReference type="GO" id="GO:0005783">
    <property type="term" value="C:endoplasmic reticulum"/>
    <property type="evidence" value="ECO:0007669"/>
    <property type="project" value="UniProtKB-SubCell"/>
</dbReference>
<dbReference type="GO" id="GO:0005840">
    <property type="term" value="C:ribosome"/>
    <property type="evidence" value="ECO:0000314"/>
    <property type="project" value="RGD"/>
</dbReference>
<dbReference type="GO" id="GO:0045202">
    <property type="term" value="C:synapse"/>
    <property type="evidence" value="ECO:0000266"/>
    <property type="project" value="RGD"/>
</dbReference>
<dbReference type="GO" id="GO:0003735">
    <property type="term" value="F:structural constituent of ribosome"/>
    <property type="evidence" value="ECO:0000266"/>
    <property type="project" value="RGD"/>
</dbReference>
<dbReference type="GO" id="GO:0006412">
    <property type="term" value="P:translation"/>
    <property type="evidence" value="ECO:0007669"/>
    <property type="project" value="InterPro"/>
</dbReference>
<dbReference type="FunFam" id="2.30.30.70:FF:000001">
    <property type="entry name" value="60S ribosomal protein L21"/>
    <property type="match status" value="1"/>
</dbReference>
<dbReference type="FunFam" id="6.10.250.3260:FF:000001">
    <property type="entry name" value="60S ribosomal protein L21"/>
    <property type="match status" value="1"/>
</dbReference>
<dbReference type="Gene3D" id="6.10.250.3260">
    <property type="match status" value="1"/>
</dbReference>
<dbReference type="Gene3D" id="2.30.30.70">
    <property type="entry name" value="Ribosomal protein L21"/>
    <property type="match status" value="1"/>
</dbReference>
<dbReference type="InterPro" id="IPR001147">
    <property type="entry name" value="Ribosomal_eL21"/>
</dbReference>
<dbReference type="InterPro" id="IPR018259">
    <property type="entry name" value="Ribosomal_eL21_CS"/>
</dbReference>
<dbReference type="InterPro" id="IPR036948">
    <property type="entry name" value="Ribosomal_eL21_sf"/>
</dbReference>
<dbReference type="InterPro" id="IPR008991">
    <property type="entry name" value="Translation_prot_SH3-like_sf"/>
</dbReference>
<dbReference type="PANTHER" id="PTHR20981">
    <property type="entry name" value="60S RIBOSOMAL PROTEIN L21"/>
    <property type="match status" value="1"/>
</dbReference>
<dbReference type="Pfam" id="PF01157">
    <property type="entry name" value="Ribosomal_L21e"/>
    <property type="match status" value="1"/>
</dbReference>
<dbReference type="SUPFAM" id="SSF50104">
    <property type="entry name" value="Translation proteins SH3-like domain"/>
    <property type="match status" value="1"/>
</dbReference>
<dbReference type="PROSITE" id="PS01171">
    <property type="entry name" value="RIBOSOMAL_L21E"/>
    <property type="match status" value="1"/>
</dbReference>
<name>RL21_RAT</name>